<evidence type="ECO:0000255" key="1">
    <source>
        <dbReference type="HAMAP-Rule" id="MF_00203"/>
    </source>
</evidence>
<gene>
    <name evidence="1" type="primary">uvrC</name>
    <name type="ordered locus">LBJ_1853</name>
</gene>
<reference key="1">
    <citation type="journal article" date="2006" name="Proc. Natl. Acad. Sci. U.S.A.">
        <title>Genome reduction in Leptospira borgpetersenii reflects limited transmission potential.</title>
        <authorList>
            <person name="Bulach D.M."/>
            <person name="Zuerner R.L."/>
            <person name="Wilson P."/>
            <person name="Seemann T."/>
            <person name="McGrath A."/>
            <person name="Cullen P.A."/>
            <person name="Davis J."/>
            <person name="Johnson M."/>
            <person name="Kuczek E."/>
            <person name="Alt D.P."/>
            <person name="Peterson-Burch B."/>
            <person name="Coppel R.L."/>
            <person name="Rood J.I."/>
            <person name="Davies J.K."/>
            <person name="Adler B."/>
        </authorList>
    </citation>
    <scope>NUCLEOTIDE SEQUENCE [LARGE SCALE GENOMIC DNA]</scope>
    <source>
        <strain>JB197</strain>
    </source>
</reference>
<keyword id="KW-0963">Cytoplasm</keyword>
<keyword id="KW-0227">DNA damage</keyword>
<keyword id="KW-0228">DNA excision</keyword>
<keyword id="KW-0234">DNA repair</keyword>
<keyword id="KW-0267">Excision nuclease</keyword>
<keyword id="KW-0742">SOS response</keyword>
<accession>Q04RU6</accession>
<proteinExistence type="inferred from homology"/>
<protein>
    <recommendedName>
        <fullName evidence="1">UvrABC system protein C</fullName>
        <shortName evidence="1">Protein UvrC</shortName>
    </recommendedName>
    <alternativeName>
        <fullName evidence="1">Excinuclease ABC subunit C</fullName>
    </alternativeName>
</protein>
<feature type="chain" id="PRO_1000077803" description="UvrABC system protein C">
    <location>
        <begin position="1"/>
        <end position="609"/>
    </location>
</feature>
<feature type="domain" description="GIY-YIG" evidence="1">
    <location>
        <begin position="19"/>
        <end position="97"/>
    </location>
</feature>
<feature type="domain" description="UVR" evidence="1">
    <location>
        <begin position="208"/>
        <end position="243"/>
    </location>
</feature>
<name>UVRC_LEPBJ</name>
<sequence>MPEILNHILILEKIKNLGISPGCYLWKSRKGEVLYIGKAKNLDKRVRNYLKENHPDIKTRALQKEIFDLDWIATGTEKEALILEATLIKKHNPRFNVRFKDDKKYPYICVSLSESFPMVYITRKLKDNGDRYFGPYSDVKSTRETLDIILRIFPVRKTRQVLPLPKPRRPCLNFDMGRCLGPCQGNIPVEDYKIVIDQVIQFLEGKKESLVGDLSIKMSASSNRMDFEKAARYRDMLQRIQNFREKQTVVSAEGGDEDVIGFARKKDEGQVILLEVRGGRLETKKSFPIQGVLDAEDSEILGAFFRDYYLNAALVPPLIFVPADIQEETAAVMDVLQEKTGFRPKLKSPRGGDKRSLLKIAEKNAELGLTERLLATHYRDQTASLKEIQEMFSLEHPPHIIECYDISHFQGSEPVASGVMFVEGKPFKQGYRKYNIRGYKGINDPGMIHEVISRRLQRIANEESVFPDLIVIDGGPTQLAKACEAAMEAGAERIPMIGLAKKREEIYFPGDNEPFIFDMNSSGMKLLRHLRDEAHRFGVSHHRSRRNKETMRSLIQNVPDIGLKRSKLLLRHFSGEKKIEDATKEELLAVPGIGENLAEKILKRIRKKE</sequence>
<organism>
    <name type="scientific">Leptospira borgpetersenii serovar Hardjo-bovis (strain JB197)</name>
    <dbReference type="NCBI Taxonomy" id="355277"/>
    <lineage>
        <taxon>Bacteria</taxon>
        <taxon>Pseudomonadati</taxon>
        <taxon>Spirochaetota</taxon>
        <taxon>Spirochaetia</taxon>
        <taxon>Leptospirales</taxon>
        <taxon>Leptospiraceae</taxon>
        <taxon>Leptospira</taxon>
    </lineage>
</organism>
<comment type="function">
    <text evidence="1">The UvrABC repair system catalyzes the recognition and processing of DNA lesions. UvrC both incises the 5' and 3' sides of the lesion. The N-terminal half is responsible for the 3' incision and the C-terminal half is responsible for the 5' incision.</text>
</comment>
<comment type="subunit">
    <text evidence="1">Interacts with UvrB in an incision complex.</text>
</comment>
<comment type="subcellular location">
    <subcellularLocation>
        <location evidence="1">Cytoplasm</location>
    </subcellularLocation>
</comment>
<comment type="similarity">
    <text evidence="1">Belongs to the UvrC family.</text>
</comment>
<dbReference type="EMBL" id="CP000350">
    <property type="protein sequence ID" value="ABJ76374.1"/>
    <property type="molecule type" value="Genomic_DNA"/>
</dbReference>
<dbReference type="RefSeq" id="WP_011670123.1">
    <property type="nucleotide sequence ID" value="NC_008510.1"/>
</dbReference>
<dbReference type="SMR" id="Q04RU6"/>
<dbReference type="KEGG" id="lbj:LBJ_1853"/>
<dbReference type="HOGENOM" id="CLU_014841_3_2_12"/>
<dbReference type="Proteomes" id="UP000000656">
    <property type="component" value="Chromosome 1"/>
</dbReference>
<dbReference type="GO" id="GO:0005737">
    <property type="term" value="C:cytoplasm"/>
    <property type="evidence" value="ECO:0007669"/>
    <property type="project" value="UniProtKB-SubCell"/>
</dbReference>
<dbReference type="GO" id="GO:0009380">
    <property type="term" value="C:excinuclease repair complex"/>
    <property type="evidence" value="ECO:0007669"/>
    <property type="project" value="InterPro"/>
</dbReference>
<dbReference type="GO" id="GO:0003677">
    <property type="term" value="F:DNA binding"/>
    <property type="evidence" value="ECO:0007669"/>
    <property type="project" value="UniProtKB-UniRule"/>
</dbReference>
<dbReference type="GO" id="GO:0009381">
    <property type="term" value="F:excinuclease ABC activity"/>
    <property type="evidence" value="ECO:0007669"/>
    <property type="project" value="UniProtKB-UniRule"/>
</dbReference>
<dbReference type="GO" id="GO:0006289">
    <property type="term" value="P:nucleotide-excision repair"/>
    <property type="evidence" value="ECO:0007669"/>
    <property type="project" value="UniProtKB-UniRule"/>
</dbReference>
<dbReference type="GO" id="GO:0009432">
    <property type="term" value="P:SOS response"/>
    <property type="evidence" value="ECO:0007669"/>
    <property type="project" value="UniProtKB-UniRule"/>
</dbReference>
<dbReference type="CDD" id="cd10434">
    <property type="entry name" value="GIY-YIG_UvrC_Cho"/>
    <property type="match status" value="1"/>
</dbReference>
<dbReference type="FunFam" id="3.40.1440.10:FF:000001">
    <property type="entry name" value="UvrABC system protein C"/>
    <property type="match status" value="1"/>
</dbReference>
<dbReference type="Gene3D" id="1.10.150.20">
    <property type="entry name" value="5' to 3' exonuclease, C-terminal subdomain"/>
    <property type="match status" value="1"/>
</dbReference>
<dbReference type="Gene3D" id="3.40.1440.10">
    <property type="entry name" value="GIY-YIG endonuclease"/>
    <property type="match status" value="1"/>
</dbReference>
<dbReference type="Gene3D" id="3.30.420.340">
    <property type="entry name" value="UvrC, RNAse H endonuclease domain"/>
    <property type="match status" value="1"/>
</dbReference>
<dbReference type="HAMAP" id="MF_00203">
    <property type="entry name" value="UvrC"/>
    <property type="match status" value="1"/>
</dbReference>
<dbReference type="InterPro" id="IPR000305">
    <property type="entry name" value="GIY-YIG_endonuc"/>
</dbReference>
<dbReference type="InterPro" id="IPR035901">
    <property type="entry name" value="GIY-YIG_endonuc_sf"/>
</dbReference>
<dbReference type="InterPro" id="IPR047296">
    <property type="entry name" value="GIY-YIG_UvrC_Cho"/>
</dbReference>
<dbReference type="InterPro" id="IPR003583">
    <property type="entry name" value="Hlx-hairpin-Hlx_DNA-bd_motif"/>
</dbReference>
<dbReference type="InterPro" id="IPR010994">
    <property type="entry name" value="RuvA_2-like"/>
</dbReference>
<dbReference type="InterPro" id="IPR001943">
    <property type="entry name" value="UVR_dom"/>
</dbReference>
<dbReference type="InterPro" id="IPR036876">
    <property type="entry name" value="UVR_dom_sf"/>
</dbReference>
<dbReference type="InterPro" id="IPR050066">
    <property type="entry name" value="UvrABC_protein_C"/>
</dbReference>
<dbReference type="InterPro" id="IPR004791">
    <property type="entry name" value="UvrC"/>
</dbReference>
<dbReference type="InterPro" id="IPR001162">
    <property type="entry name" value="UvrC_RNase_H_dom"/>
</dbReference>
<dbReference type="InterPro" id="IPR038476">
    <property type="entry name" value="UvrC_RNase_H_dom_sf"/>
</dbReference>
<dbReference type="NCBIfam" id="NF001824">
    <property type="entry name" value="PRK00558.1-5"/>
    <property type="match status" value="1"/>
</dbReference>
<dbReference type="NCBIfam" id="TIGR00194">
    <property type="entry name" value="uvrC"/>
    <property type="match status" value="1"/>
</dbReference>
<dbReference type="PANTHER" id="PTHR30562:SF1">
    <property type="entry name" value="UVRABC SYSTEM PROTEIN C"/>
    <property type="match status" value="1"/>
</dbReference>
<dbReference type="PANTHER" id="PTHR30562">
    <property type="entry name" value="UVRC/OXIDOREDUCTASE"/>
    <property type="match status" value="1"/>
</dbReference>
<dbReference type="Pfam" id="PF01541">
    <property type="entry name" value="GIY-YIG"/>
    <property type="match status" value="1"/>
</dbReference>
<dbReference type="Pfam" id="PF14520">
    <property type="entry name" value="HHH_5"/>
    <property type="match status" value="1"/>
</dbReference>
<dbReference type="Pfam" id="PF02151">
    <property type="entry name" value="UVR"/>
    <property type="match status" value="1"/>
</dbReference>
<dbReference type="Pfam" id="PF22920">
    <property type="entry name" value="UvrC_RNaseH"/>
    <property type="match status" value="1"/>
</dbReference>
<dbReference type="Pfam" id="PF08459">
    <property type="entry name" value="UvrC_RNaseH_dom"/>
    <property type="match status" value="1"/>
</dbReference>
<dbReference type="SMART" id="SM00465">
    <property type="entry name" value="GIYc"/>
    <property type="match status" value="1"/>
</dbReference>
<dbReference type="SMART" id="SM00278">
    <property type="entry name" value="HhH1"/>
    <property type="match status" value="2"/>
</dbReference>
<dbReference type="SUPFAM" id="SSF46600">
    <property type="entry name" value="C-terminal UvrC-binding domain of UvrB"/>
    <property type="match status" value="1"/>
</dbReference>
<dbReference type="SUPFAM" id="SSF82771">
    <property type="entry name" value="GIY-YIG endonuclease"/>
    <property type="match status" value="1"/>
</dbReference>
<dbReference type="SUPFAM" id="SSF47781">
    <property type="entry name" value="RuvA domain 2-like"/>
    <property type="match status" value="1"/>
</dbReference>
<dbReference type="PROSITE" id="PS50164">
    <property type="entry name" value="GIY_YIG"/>
    <property type="match status" value="1"/>
</dbReference>
<dbReference type="PROSITE" id="PS50151">
    <property type="entry name" value="UVR"/>
    <property type="match status" value="1"/>
</dbReference>
<dbReference type="PROSITE" id="PS50165">
    <property type="entry name" value="UVRC"/>
    <property type="match status" value="1"/>
</dbReference>